<reference key="1">
    <citation type="submission" date="2007-06" db="EMBL/GenBank/DDBJ databases">
        <authorList>
            <consortium name="NIH - Mammalian Gene Collection (MGC) project"/>
        </authorList>
    </citation>
    <scope>NUCLEOTIDE SEQUENCE [LARGE SCALE MRNA]</scope>
    <source>
        <strain>Hereford</strain>
        <tissue>Hypothalamus</tissue>
    </source>
</reference>
<comment type="function">
    <text evidence="2">Accepts ubiquitin from the E1 complex and catalyzes its covalent attachment to other proteins. Specifically monoubiquitinates the N-terminus of various substrates, including ATXN3, MAPT/TAU, POLR2H/RPB8 and STUB1/CHIP, by recognizing backbone atoms of disordered N-termini. Involved in degradation of misfolded chaperone substrates by mediating monoubiquitination of STUB1/CHIP, leading to recruitment of ATXN3 to monoubiquitinated STUB1/CHIP, and restriction of the length of ubiquitin chain attached to STUB1/CHIP substrates by ATXN3. After UV irradiation, but not after mitomycin-C (MMC) treatment, acts as a specific E2 ubiquitin-conjugating enzyme for the Fanconi anemia complex by associating with E3 ubiquitin-protein ligase FANCL and catalyzing monoubiquitination of FANCD2, a key step in the DNA damage pathway. In vitro catalyzes 'Lys-11'-linked polyubiquitination. UBE2W-catalyzed ubiquitination also occurs in the presence of inactive RING/U-box type E3s, i.e. lacking the active site cysteine residues to form thioester bonds with ubiquitin, or even in the absence of E3, albeit at a slower rate.</text>
</comment>
<comment type="catalytic activity">
    <reaction evidence="2 3">
        <text>S-ubiquitinyl-[E1 ubiquitin-activating enzyme]-L-cysteine + [E2 ubiquitin-conjugating enzyme]-L-cysteine = [E1 ubiquitin-activating enzyme]-L-cysteine + S-ubiquitinyl-[E2 ubiquitin-conjugating enzyme]-L-cysteine.</text>
        <dbReference type="EC" id="2.3.2.23"/>
    </reaction>
</comment>
<comment type="catalytic activity">
    <reaction evidence="2">
        <text>S-ubiquitinyl-[E1 ubiquitin-activating enzyme]-L-cysteine + [acceptor protein]-N-terminal-amino acid = [E1 ubiquitin-activating enzyme]-L-cysteine + N-terminal-ubiquitinyl-[acceptor protein].</text>
        <dbReference type="EC" id="2.3.2.25"/>
    </reaction>
</comment>
<comment type="pathway">
    <text evidence="3">Protein modification; protein ubiquitination.</text>
</comment>
<comment type="subunit">
    <text evidence="1 2">Homodimer. Interacts with FANCL. Interacts with STUB1/CHIP.</text>
</comment>
<comment type="subcellular location">
    <subcellularLocation>
        <location evidence="2">Nucleus</location>
    </subcellularLocation>
    <text evidence="2">In the nucleus, colocalizes with FANCL.</text>
</comment>
<comment type="PTM">
    <text evidence="1 2">Ubiquitinated in vitro in the presence of FANCL. Autoubiquitinated at Met-1.</text>
</comment>
<comment type="similarity">
    <text evidence="3">Belongs to the ubiquitin-conjugating enzyme family.</text>
</comment>
<accession>A6H795</accession>
<gene>
    <name type="primary">UBE2W</name>
</gene>
<proteinExistence type="evidence at transcript level"/>
<evidence type="ECO:0000250" key="1">
    <source>
        <dbReference type="UniProtKB" id="Q8VDW4"/>
    </source>
</evidence>
<evidence type="ECO:0000250" key="2">
    <source>
        <dbReference type="UniProtKB" id="Q96B02"/>
    </source>
</evidence>
<evidence type="ECO:0000255" key="3">
    <source>
        <dbReference type="PROSITE-ProRule" id="PRU00388"/>
    </source>
</evidence>
<keyword id="KW-0067">ATP-binding</keyword>
<keyword id="KW-0227">DNA damage</keyword>
<keyword id="KW-0234">DNA repair</keyword>
<keyword id="KW-0547">Nucleotide-binding</keyword>
<keyword id="KW-0539">Nucleus</keyword>
<keyword id="KW-1185">Reference proteome</keyword>
<keyword id="KW-0808">Transferase</keyword>
<keyword id="KW-0832">Ubl conjugation</keyword>
<keyword id="KW-0833">Ubl conjugation pathway</keyword>
<feature type="chain" id="PRO_0000414630" description="Ubiquitin-conjugating enzyme E2 W">
    <location>
        <begin position="1"/>
        <end position="151"/>
    </location>
</feature>
<feature type="domain" description="UBC core" evidence="3">
    <location>
        <begin position="3"/>
        <end position="151"/>
    </location>
</feature>
<feature type="active site" description="Glycyl thioester intermediate" evidence="3">
    <location>
        <position position="91"/>
    </location>
</feature>
<feature type="cross-link" description="Peptide (Met-Gly) (interchain with G-Cter in ubiquitin)" evidence="2">
    <location>
        <position position="1"/>
    </location>
</feature>
<name>UBE2W_BOVIN</name>
<organism>
    <name type="scientific">Bos taurus</name>
    <name type="common">Bovine</name>
    <dbReference type="NCBI Taxonomy" id="9913"/>
    <lineage>
        <taxon>Eukaryota</taxon>
        <taxon>Metazoa</taxon>
        <taxon>Chordata</taxon>
        <taxon>Craniata</taxon>
        <taxon>Vertebrata</taxon>
        <taxon>Euteleostomi</taxon>
        <taxon>Mammalia</taxon>
        <taxon>Eutheria</taxon>
        <taxon>Laurasiatheria</taxon>
        <taxon>Artiodactyla</taxon>
        <taxon>Ruminantia</taxon>
        <taxon>Pecora</taxon>
        <taxon>Bovidae</taxon>
        <taxon>Bovinae</taxon>
        <taxon>Bos</taxon>
    </lineage>
</organism>
<sequence length="151" mass="17331">MASMQKRLQKELLALQNDPPPGMTLNEKSVQNSITQWIVDMEGAPGTLYEGEKFQLLFKFSSRYPFDSPQVMFTGENIPVHPHVYSNGHICLSILTEDWSPALSVQSVCLSIISMLSSCKEKRRPPDNSFYVRTCNKNPKKTKWWYHDDTC</sequence>
<protein>
    <recommendedName>
        <fullName>Ubiquitin-conjugating enzyme E2 W</fullName>
        <ecNumber>2.3.2.23</ecNumber>
    </recommendedName>
    <alternativeName>
        <fullName>E2 ubiquitin-conjugating enzyme W</fullName>
    </alternativeName>
    <alternativeName>
        <fullName>N-terminal E2 ubiquitin-conjugating enzyme</fullName>
        <ecNumber>2.3.2.25</ecNumber>
    </alternativeName>
    <alternativeName>
        <fullName>N-terminus-conjugating E2</fullName>
    </alternativeName>
    <alternativeName>
        <fullName>Ubiquitin carrier protein W</fullName>
    </alternativeName>
    <alternativeName>
        <fullName>Ubiquitin-protein ligase W</fullName>
    </alternativeName>
</protein>
<dbReference type="EC" id="2.3.2.23"/>
<dbReference type="EC" id="2.3.2.25"/>
<dbReference type="EMBL" id="BC146162">
    <property type="protein sequence ID" value="AAI46163.1"/>
    <property type="molecule type" value="mRNA"/>
</dbReference>
<dbReference type="RefSeq" id="NP_001092592.1">
    <property type="nucleotide sequence ID" value="NM_001099122.3"/>
</dbReference>
<dbReference type="SMR" id="A6H795"/>
<dbReference type="FunCoup" id="A6H795">
    <property type="interactions" value="3563"/>
</dbReference>
<dbReference type="STRING" id="9913.ENSBTAP00000010872"/>
<dbReference type="PaxDb" id="9913-ENSBTAP00000010872"/>
<dbReference type="GeneID" id="613423"/>
<dbReference type="KEGG" id="bta:613423"/>
<dbReference type="CTD" id="55284"/>
<dbReference type="VEuPathDB" id="HostDB:ENSBTAG00000048843"/>
<dbReference type="eggNOG" id="KOG0427">
    <property type="taxonomic scope" value="Eukaryota"/>
</dbReference>
<dbReference type="HOGENOM" id="CLU_030988_15_1_1"/>
<dbReference type="InParanoid" id="A6H795"/>
<dbReference type="OrthoDB" id="406833at2759"/>
<dbReference type="TreeFam" id="TF314582"/>
<dbReference type="Reactome" id="R-BTA-8866652">
    <property type="pathway name" value="Synthesis of active ubiquitin: roles of E1 and E2 enzymes"/>
</dbReference>
<dbReference type="Reactome" id="R-BTA-983168">
    <property type="pathway name" value="Antigen processing: Ubiquitination &amp; Proteasome degradation"/>
</dbReference>
<dbReference type="UniPathway" id="UPA00143"/>
<dbReference type="Proteomes" id="UP000009136">
    <property type="component" value="Chromosome 14"/>
</dbReference>
<dbReference type="Bgee" id="ENSBTAG00000048843">
    <property type="expression patterns" value="Expressed in neutrophil and 109 other cell types or tissues"/>
</dbReference>
<dbReference type="GO" id="GO:0005634">
    <property type="term" value="C:nucleus"/>
    <property type="evidence" value="ECO:0000250"/>
    <property type="project" value="UniProtKB"/>
</dbReference>
<dbReference type="GO" id="GO:0005524">
    <property type="term" value="F:ATP binding"/>
    <property type="evidence" value="ECO:0007669"/>
    <property type="project" value="UniProtKB-KW"/>
</dbReference>
<dbReference type="GO" id="GO:0061631">
    <property type="term" value="F:ubiquitin conjugating enzyme activity"/>
    <property type="evidence" value="ECO:0000318"/>
    <property type="project" value="GO_Central"/>
</dbReference>
<dbReference type="GO" id="GO:0004842">
    <property type="term" value="F:ubiquitin-protein transferase activity"/>
    <property type="evidence" value="ECO:0000250"/>
    <property type="project" value="UniProtKB"/>
</dbReference>
<dbReference type="GO" id="GO:0071218">
    <property type="term" value="P:cellular response to misfolded protein"/>
    <property type="evidence" value="ECO:0000250"/>
    <property type="project" value="UniProtKB"/>
</dbReference>
<dbReference type="GO" id="GO:0006281">
    <property type="term" value="P:DNA repair"/>
    <property type="evidence" value="ECO:0007669"/>
    <property type="project" value="UniProtKB-KW"/>
</dbReference>
<dbReference type="GO" id="GO:0043161">
    <property type="term" value="P:proteasome-mediated ubiquitin-dependent protein catabolic process"/>
    <property type="evidence" value="ECO:0000250"/>
    <property type="project" value="UniProtKB"/>
</dbReference>
<dbReference type="GO" id="GO:0006513">
    <property type="term" value="P:protein monoubiquitination"/>
    <property type="evidence" value="ECO:0000250"/>
    <property type="project" value="UniProtKB"/>
</dbReference>
<dbReference type="GO" id="GO:0000209">
    <property type="term" value="P:protein polyubiquitination"/>
    <property type="evidence" value="ECO:0000318"/>
    <property type="project" value="GO_Central"/>
</dbReference>
<dbReference type="GO" id="GO:0006515">
    <property type="term" value="P:protein quality control for misfolded or incompletely synthesized proteins"/>
    <property type="evidence" value="ECO:0000250"/>
    <property type="project" value="UniProtKB"/>
</dbReference>
<dbReference type="CDD" id="cd23808">
    <property type="entry name" value="UBCc_UBE2W"/>
    <property type="match status" value="1"/>
</dbReference>
<dbReference type="FunFam" id="3.10.110.10:FF:000022">
    <property type="entry name" value="Ubiquitin-conjugating enzyme E2 W"/>
    <property type="match status" value="1"/>
</dbReference>
<dbReference type="Gene3D" id="3.10.110.10">
    <property type="entry name" value="Ubiquitin Conjugating Enzyme"/>
    <property type="match status" value="1"/>
</dbReference>
<dbReference type="InterPro" id="IPR050113">
    <property type="entry name" value="Ub_conjugating_enzyme"/>
</dbReference>
<dbReference type="InterPro" id="IPR000608">
    <property type="entry name" value="UBQ-conjugat_E2_core"/>
</dbReference>
<dbReference type="InterPro" id="IPR016135">
    <property type="entry name" value="UBQ-conjugating_enzyme/RWD"/>
</dbReference>
<dbReference type="PANTHER" id="PTHR24067">
    <property type="entry name" value="UBIQUITIN-CONJUGATING ENZYME E2"/>
    <property type="match status" value="1"/>
</dbReference>
<dbReference type="Pfam" id="PF00179">
    <property type="entry name" value="UQ_con"/>
    <property type="match status" value="1"/>
</dbReference>
<dbReference type="SMART" id="SM00212">
    <property type="entry name" value="UBCc"/>
    <property type="match status" value="1"/>
</dbReference>
<dbReference type="SUPFAM" id="SSF54495">
    <property type="entry name" value="UBC-like"/>
    <property type="match status" value="1"/>
</dbReference>
<dbReference type="PROSITE" id="PS50127">
    <property type="entry name" value="UBC_2"/>
    <property type="match status" value="1"/>
</dbReference>